<gene>
    <name evidence="1" type="primary">hisG</name>
    <name type="ordered locus">BCE33L1290</name>
</gene>
<dbReference type="EC" id="2.4.2.17" evidence="1"/>
<dbReference type="EMBL" id="CP000001">
    <property type="protein sequence ID" value="AAU18957.1"/>
    <property type="molecule type" value="Genomic_DNA"/>
</dbReference>
<dbReference type="RefSeq" id="WP_001244471.1">
    <property type="nucleotide sequence ID" value="NZ_CP009968.1"/>
</dbReference>
<dbReference type="SMR" id="Q63DX3"/>
<dbReference type="GeneID" id="45021404"/>
<dbReference type="KEGG" id="bcz:BCE33L1290"/>
<dbReference type="PATRIC" id="fig|288681.22.peg.4264"/>
<dbReference type="UniPathway" id="UPA00031">
    <property type="reaction ID" value="UER00006"/>
</dbReference>
<dbReference type="Proteomes" id="UP000002612">
    <property type="component" value="Chromosome"/>
</dbReference>
<dbReference type="GO" id="GO:0005737">
    <property type="term" value="C:cytoplasm"/>
    <property type="evidence" value="ECO:0007669"/>
    <property type="project" value="UniProtKB-SubCell"/>
</dbReference>
<dbReference type="GO" id="GO:0005524">
    <property type="term" value="F:ATP binding"/>
    <property type="evidence" value="ECO:0007669"/>
    <property type="project" value="UniProtKB-KW"/>
</dbReference>
<dbReference type="GO" id="GO:0003879">
    <property type="term" value="F:ATP phosphoribosyltransferase activity"/>
    <property type="evidence" value="ECO:0007669"/>
    <property type="project" value="UniProtKB-UniRule"/>
</dbReference>
<dbReference type="GO" id="GO:0000105">
    <property type="term" value="P:L-histidine biosynthetic process"/>
    <property type="evidence" value="ECO:0007669"/>
    <property type="project" value="UniProtKB-UniRule"/>
</dbReference>
<dbReference type="CDD" id="cd13595">
    <property type="entry name" value="PBP2_HisGs"/>
    <property type="match status" value="1"/>
</dbReference>
<dbReference type="FunFam" id="3.40.190.10:FF:000011">
    <property type="entry name" value="ATP phosphoribosyltransferase"/>
    <property type="match status" value="1"/>
</dbReference>
<dbReference type="Gene3D" id="3.40.190.10">
    <property type="entry name" value="Periplasmic binding protein-like II"/>
    <property type="match status" value="2"/>
</dbReference>
<dbReference type="HAMAP" id="MF_01018">
    <property type="entry name" value="HisG_Short"/>
    <property type="match status" value="1"/>
</dbReference>
<dbReference type="InterPro" id="IPR013820">
    <property type="entry name" value="ATP_PRibTrfase_cat"/>
</dbReference>
<dbReference type="InterPro" id="IPR018198">
    <property type="entry name" value="ATP_PRibTrfase_CS"/>
</dbReference>
<dbReference type="InterPro" id="IPR001348">
    <property type="entry name" value="ATP_PRibTrfase_HisG"/>
</dbReference>
<dbReference type="InterPro" id="IPR024893">
    <property type="entry name" value="ATP_PRibTrfase_HisG_short"/>
</dbReference>
<dbReference type="NCBIfam" id="TIGR00070">
    <property type="entry name" value="hisG"/>
    <property type="match status" value="1"/>
</dbReference>
<dbReference type="PANTHER" id="PTHR21403:SF8">
    <property type="entry name" value="ATP PHOSPHORIBOSYLTRANSFERASE"/>
    <property type="match status" value="1"/>
</dbReference>
<dbReference type="PANTHER" id="PTHR21403">
    <property type="entry name" value="ATP PHOSPHORIBOSYLTRANSFERASE ATP-PRTASE"/>
    <property type="match status" value="1"/>
</dbReference>
<dbReference type="Pfam" id="PF01634">
    <property type="entry name" value="HisG"/>
    <property type="match status" value="1"/>
</dbReference>
<dbReference type="SUPFAM" id="SSF53850">
    <property type="entry name" value="Periplasmic binding protein-like II"/>
    <property type="match status" value="1"/>
</dbReference>
<dbReference type="PROSITE" id="PS01316">
    <property type="entry name" value="ATP_P_PHORIBOSYLTR"/>
    <property type="match status" value="1"/>
</dbReference>
<evidence type="ECO:0000255" key="1">
    <source>
        <dbReference type="HAMAP-Rule" id="MF_01018"/>
    </source>
</evidence>
<reference key="1">
    <citation type="journal article" date="2006" name="J. Bacteriol.">
        <title>Pathogenomic sequence analysis of Bacillus cereus and Bacillus thuringiensis isolates closely related to Bacillus anthracis.</title>
        <authorList>
            <person name="Han C.S."/>
            <person name="Xie G."/>
            <person name="Challacombe J.F."/>
            <person name="Altherr M.R."/>
            <person name="Bhotika S.S."/>
            <person name="Bruce D."/>
            <person name="Campbell C.S."/>
            <person name="Campbell M.L."/>
            <person name="Chen J."/>
            <person name="Chertkov O."/>
            <person name="Cleland C."/>
            <person name="Dimitrijevic M."/>
            <person name="Doggett N.A."/>
            <person name="Fawcett J.J."/>
            <person name="Glavina T."/>
            <person name="Goodwin L.A."/>
            <person name="Hill K.K."/>
            <person name="Hitchcock P."/>
            <person name="Jackson P.J."/>
            <person name="Keim P."/>
            <person name="Kewalramani A.R."/>
            <person name="Longmire J."/>
            <person name="Lucas S."/>
            <person name="Malfatti S."/>
            <person name="McMurry K."/>
            <person name="Meincke L.J."/>
            <person name="Misra M."/>
            <person name="Moseman B.L."/>
            <person name="Mundt M."/>
            <person name="Munk A.C."/>
            <person name="Okinaka R.T."/>
            <person name="Parson-Quintana B."/>
            <person name="Reilly L.P."/>
            <person name="Richardson P."/>
            <person name="Robinson D.L."/>
            <person name="Rubin E."/>
            <person name="Saunders E."/>
            <person name="Tapia R."/>
            <person name="Tesmer J.G."/>
            <person name="Thayer N."/>
            <person name="Thompson L.S."/>
            <person name="Tice H."/>
            <person name="Ticknor L.O."/>
            <person name="Wills P.L."/>
            <person name="Brettin T.S."/>
            <person name="Gilna P."/>
        </authorList>
    </citation>
    <scope>NUCLEOTIDE SEQUENCE [LARGE SCALE GENOMIC DNA]</scope>
    <source>
        <strain>ZK / E33L</strain>
    </source>
</reference>
<organism>
    <name type="scientific">Bacillus cereus (strain ZK / E33L)</name>
    <dbReference type="NCBI Taxonomy" id="288681"/>
    <lineage>
        <taxon>Bacteria</taxon>
        <taxon>Bacillati</taxon>
        <taxon>Bacillota</taxon>
        <taxon>Bacilli</taxon>
        <taxon>Bacillales</taxon>
        <taxon>Bacillaceae</taxon>
        <taxon>Bacillus</taxon>
        <taxon>Bacillus cereus group</taxon>
    </lineage>
</organism>
<sequence length="211" mass="23585">MRNIQIALTKGRLEKHVIPLFEQIGIDCSELKNKGRKLVFQSKNTDISFILVKAVDVATYVEHGVADIGVVGKDILMENEKDIYEMLDLGVGVCKFCVASIPTYNPKSYRKKCIATKYPHITSNYFHNKGEDVEIIKIEGSVEIAPILGLADAIVDIVETGKTLQENGLIVFEEMYSISARMIVNKAALKTKKDEIFSIINMMEQEILSGK</sequence>
<accession>Q63DX3</accession>
<name>HIS1_BACCZ</name>
<comment type="function">
    <text evidence="1">Catalyzes the condensation of ATP and 5-phosphoribose 1-diphosphate to form N'-(5'-phosphoribosyl)-ATP (PR-ATP). Has a crucial role in the pathway because the rate of histidine biosynthesis seems to be controlled primarily by regulation of HisG enzymatic activity.</text>
</comment>
<comment type="catalytic activity">
    <reaction evidence="1">
        <text>1-(5-phospho-beta-D-ribosyl)-ATP + diphosphate = 5-phospho-alpha-D-ribose 1-diphosphate + ATP</text>
        <dbReference type="Rhea" id="RHEA:18473"/>
        <dbReference type="ChEBI" id="CHEBI:30616"/>
        <dbReference type="ChEBI" id="CHEBI:33019"/>
        <dbReference type="ChEBI" id="CHEBI:58017"/>
        <dbReference type="ChEBI" id="CHEBI:73183"/>
        <dbReference type="EC" id="2.4.2.17"/>
    </reaction>
</comment>
<comment type="pathway">
    <text evidence="1">Amino-acid biosynthesis; L-histidine biosynthesis; L-histidine from 5-phospho-alpha-D-ribose 1-diphosphate: step 1/9.</text>
</comment>
<comment type="subunit">
    <text evidence="1">Heteromultimer composed of HisG and HisZ subunits.</text>
</comment>
<comment type="subcellular location">
    <subcellularLocation>
        <location evidence="1">Cytoplasm</location>
    </subcellularLocation>
</comment>
<comment type="domain">
    <text>Lacks the C-terminal regulatory region which is replaced by HisZ.</text>
</comment>
<comment type="similarity">
    <text evidence="1">Belongs to the ATP phosphoribosyltransferase family. Short subfamily.</text>
</comment>
<protein>
    <recommendedName>
        <fullName evidence="1">ATP phosphoribosyltransferase</fullName>
        <shortName evidence="1">ATP-PRT</shortName>
        <shortName evidence="1">ATP-PRTase</shortName>
        <ecNumber evidence="1">2.4.2.17</ecNumber>
    </recommendedName>
</protein>
<proteinExistence type="inferred from homology"/>
<feature type="chain" id="PRO_0000229303" description="ATP phosphoribosyltransferase">
    <location>
        <begin position="1"/>
        <end position="211"/>
    </location>
</feature>
<keyword id="KW-0028">Amino-acid biosynthesis</keyword>
<keyword id="KW-0067">ATP-binding</keyword>
<keyword id="KW-0963">Cytoplasm</keyword>
<keyword id="KW-0328">Glycosyltransferase</keyword>
<keyword id="KW-0368">Histidine biosynthesis</keyword>
<keyword id="KW-0547">Nucleotide-binding</keyword>
<keyword id="KW-0808">Transferase</keyword>